<gene>
    <name evidence="4 9" type="primary">Gsdmc4</name>
</gene>
<dbReference type="EMBL" id="AK018537">
    <property type="protein sequence ID" value="BAB31262.1"/>
    <property type="molecule type" value="mRNA"/>
</dbReference>
<dbReference type="EMBL" id="AK163061">
    <property type="protein sequence ID" value="BAE37176.1"/>
    <property type="molecule type" value="mRNA"/>
</dbReference>
<dbReference type="EMBL" id="AC140673">
    <property type="status" value="NOT_ANNOTATED_CDS"/>
    <property type="molecule type" value="Genomic_DNA"/>
</dbReference>
<dbReference type="CCDS" id="CCDS49617.1"/>
<dbReference type="RefSeq" id="NP_083268.1">
    <property type="nucleotide sequence ID" value="NM_028992.1"/>
</dbReference>
<dbReference type="RefSeq" id="XP_006521565.1">
    <property type="nucleotide sequence ID" value="XM_006521502.4"/>
</dbReference>
<dbReference type="RefSeq" id="XP_011244056.1">
    <property type="nucleotide sequence ID" value="XM_011245754.3"/>
</dbReference>
<dbReference type="RefSeq" id="XP_011244057.1">
    <property type="nucleotide sequence ID" value="XM_011245755.4"/>
</dbReference>
<dbReference type="RefSeq" id="XP_011244058.1">
    <property type="nucleotide sequence ID" value="XM_011245756.3"/>
</dbReference>
<dbReference type="SMR" id="Q3TR54"/>
<dbReference type="FunCoup" id="Q3TR54">
    <property type="interactions" value="133"/>
</dbReference>
<dbReference type="STRING" id="10090.ENSMUSP00000140269"/>
<dbReference type="PaxDb" id="10090-ENSMUSP00000140269"/>
<dbReference type="ProteomicsDB" id="269841"/>
<dbReference type="Ensembl" id="ENSMUST00000063530.7">
    <property type="protein sequence ID" value="ENSMUSP00000066072.7"/>
    <property type="gene ID" value="ENSMUSG00000055748.13"/>
</dbReference>
<dbReference type="Ensembl" id="ENSMUST00000188108.7">
    <property type="protein sequence ID" value="ENSMUSP00000140269.2"/>
    <property type="gene ID" value="ENSMUSG00000055748.13"/>
</dbReference>
<dbReference type="GeneID" id="74548"/>
<dbReference type="KEGG" id="mmu:74548"/>
<dbReference type="UCSC" id="uc007vzc.1">
    <property type="organism name" value="mouse"/>
</dbReference>
<dbReference type="AGR" id="MGI:1921798"/>
<dbReference type="CTD" id="74548"/>
<dbReference type="MGI" id="MGI:1921798">
    <property type="gene designation" value="Gsdmc4"/>
</dbReference>
<dbReference type="VEuPathDB" id="HostDB:ENSMUSG00000055748"/>
<dbReference type="eggNOG" id="ENOG502S0IQ">
    <property type="taxonomic scope" value="Eukaryota"/>
</dbReference>
<dbReference type="GeneTree" id="ENSGT00950000183140"/>
<dbReference type="HOGENOM" id="CLU_040752_2_0_1"/>
<dbReference type="InParanoid" id="Q3TR54"/>
<dbReference type="OrthoDB" id="9836623at2759"/>
<dbReference type="PhylomeDB" id="Q3TR54"/>
<dbReference type="TreeFam" id="TF331886"/>
<dbReference type="BioGRID-ORCS" id="74548">
    <property type="hits" value="3 hits in 75 CRISPR screens"/>
</dbReference>
<dbReference type="ChiTaRS" id="Gsdmc4">
    <property type="organism name" value="mouse"/>
</dbReference>
<dbReference type="PRO" id="PR:Q3TR54"/>
<dbReference type="Proteomes" id="UP000000589">
    <property type="component" value="Chromosome 15"/>
</dbReference>
<dbReference type="RNAct" id="Q3TR54">
    <property type="molecule type" value="protein"/>
</dbReference>
<dbReference type="Bgee" id="ENSMUSG00000055748">
    <property type="expression patterns" value="Expressed in left colon and 45 other cell types or tissues"/>
</dbReference>
<dbReference type="ExpressionAtlas" id="Q3TR54">
    <property type="expression patterns" value="baseline and differential"/>
</dbReference>
<dbReference type="GO" id="GO:0005829">
    <property type="term" value="C:cytosol"/>
    <property type="evidence" value="ECO:0007669"/>
    <property type="project" value="UniProtKB-SubCell"/>
</dbReference>
<dbReference type="GO" id="GO:0005886">
    <property type="term" value="C:plasma membrane"/>
    <property type="evidence" value="ECO:0007669"/>
    <property type="project" value="UniProtKB-SubCell"/>
</dbReference>
<dbReference type="GO" id="GO:0012501">
    <property type="term" value="P:programmed cell death"/>
    <property type="evidence" value="ECO:0007669"/>
    <property type="project" value="UniProtKB-KW"/>
</dbReference>
<dbReference type="InterPro" id="IPR007677">
    <property type="entry name" value="Gasdermin"/>
</dbReference>
<dbReference type="InterPro" id="IPR040460">
    <property type="entry name" value="Gasdermin_pore"/>
</dbReference>
<dbReference type="InterPro" id="IPR041263">
    <property type="entry name" value="Gasdermin_PUB"/>
</dbReference>
<dbReference type="PANTHER" id="PTHR16399">
    <property type="entry name" value="GASDERMIN"/>
    <property type="match status" value="1"/>
</dbReference>
<dbReference type="PANTHER" id="PTHR16399:SF21">
    <property type="entry name" value="GASDERMIN-C"/>
    <property type="match status" value="1"/>
</dbReference>
<dbReference type="Pfam" id="PF04598">
    <property type="entry name" value="Gasdermin"/>
    <property type="match status" value="1"/>
</dbReference>
<dbReference type="Pfam" id="PF17708">
    <property type="entry name" value="Gasdermin_C"/>
    <property type="match status" value="1"/>
</dbReference>
<evidence type="ECO:0000250" key="1">
    <source>
        <dbReference type="UniProtKB" id="Q5Y4Y6"/>
    </source>
</evidence>
<evidence type="ECO:0000250" key="2">
    <source>
        <dbReference type="UniProtKB" id="Q9BYG8"/>
    </source>
</evidence>
<evidence type="ECO:0000269" key="3">
    <source>
    </source>
</evidence>
<evidence type="ECO:0000303" key="4">
    <source>
    </source>
</evidence>
<evidence type="ECO:0000305" key="5"/>
<evidence type="ECO:0000305" key="6">
    <source>
    </source>
</evidence>
<evidence type="ECO:0000312" key="7">
    <source>
        <dbReference type="EMBL" id="BAB31262.1"/>
    </source>
</evidence>
<evidence type="ECO:0000312" key="8">
    <source>
        <dbReference type="EMBL" id="BAE37176.1"/>
    </source>
</evidence>
<evidence type="ECO:0000312" key="9">
    <source>
        <dbReference type="MGI" id="MGI:1921798"/>
    </source>
</evidence>
<comment type="function">
    <molecule>Gasdermin-C4</molecule>
    <text evidence="2">This form constitutes the precursor of the pore-forming protein: upon cleavage, the released N-terminal moiety (Gasdermin-C4, N-terminal) binds to membranes and forms pores, triggering pyroptosis.</text>
</comment>
<comment type="function">
    <molecule>Gasdermin-C4, N-terminal</molecule>
    <text evidence="2">Pore-forming protein that causes membrane permeabilization and pyroptosis. Produced by the cleavage of gasdermin-C4 by caspase CASP8 in response to death signals. After cleavage, moves to the plasma membrane where it strongly binds to membrane inner leaflet lipids. Homooligomerizes within the membrane and forms pores of 10-15 nanometers (nm) of inner diameter, triggering pyroptosis.</text>
</comment>
<comment type="activity regulation">
    <molecule>Gasdermin-C4</molecule>
    <text evidence="2">The full-length protein before cleavage is inactive: intramolecular interactions between N- and C-terminal domains mediate autoinhibition in the absence of activation signal. The intrinsic pyroptosis-inducing activity is carried by the released N-terminal moiety (Gasdermin-C4, N-terminal) following cleavage by caspase CASP8.</text>
</comment>
<comment type="subunit">
    <molecule>Gasdermin-C4, N-terminal</molecule>
    <text evidence="1">Homooligomer; homooligomeric ring-shaped pore complex containing 27-28 subunits when inserted in the membrane.</text>
</comment>
<comment type="subcellular location">
    <molecule>Gasdermin-C4</molecule>
    <subcellularLocation>
        <location evidence="2">Cytoplasm</location>
        <location evidence="2">Cytosol</location>
    </subcellularLocation>
</comment>
<comment type="subcellular location">
    <molecule>Gasdermin-C4, N-terminal</molecule>
    <subcellularLocation>
        <location evidence="1">Cell membrane</location>
        <topology evidence="1">Multi-pass membrane protein</topology>
    </subcellularLocation>
</comment>
<comment type="domain">
    <text evidence="1">Intramolecular interactions between N- and C-terminal domains are important for autoinhibition in the absence of activation signal. The intrinsic pyroptosis-inducing activity is carried by the N-terminal domain.</text>
</comment>
<comment type="PTM">
    <text evidence="3">Cleavage by CASP8 relieves autoinhibition by releasing the N-terminal moiety (Gasdermin-C4, N-terminal) that initiates pyroptosis.</text>
</comment>
<comment type="PTM">
    <text evidence="2">Palmitoylated.</text>
</comment>
<comment type="similarity">
    <text evidence="5">Belongs to the gasdermin family.</text>
</comment>
<name>GSDC4_MOUSE</name>
<feature type="chain" id="PRO_0000347333" description="Gasdermin-C4">
    <location>
        <begin position="1"/>
        <end position="480"/>
    </location>
</feature>
<feature type="chain" id="PRO_0000451682" description="Gasdermin-C4, N-terminal" evidence="6">
    <location>
        <begin position="1"/>
        <end position="233"/>
    </location>
</feature>
<feature type="chain" id="PRO_0000451683" description="Gasdermin-C4, C-terminal" evidence="6">
    <location>
        <begin position="234"/>
        <end position="480"/>
    </location>
</feature>
<feature type="region of interest" description="Triggers pyroptosis" evidence="2">
    <location>
        <begin position="1"/>
        <end position="226"/>
    </location>
</feature>
<feature type="site" description="Cleavage; by CASP8" evidence="3">
    <location>
        <begin position="233"/>
        <end position="234"/>
    </location>
</feature>
<feature type="sequence conflict" description="In Ref. 1; BAE37176." evidence="5" ref="1">
    <original>A</original>
    <variation>T</variation>
    <location>
        <position position="75"/>
    </location>
</feature>
<feature type="sequence conflict" description="In Ref. 1; BAB31262." evidence="5" ref="1">
    <original>G</original>
    <variation>V</variation>
    <location>
        <position position="107"/>
    </location>
</feature>
<accession>Q3TR54</accession>
<accession>E9QKJ0</accession>
<accession>Q9D326</accession>
<keyword id="KW-1003">Cell membrane</keyword>
<keyword id="KW-0963">Cytoplasm</keyword>
<keyword id="KW-0449">Lipoprotein</keyword>
<keyword id="KW-0472">Membrane</keyword>
<keyword id="KW-1210">Necrosis</keyword>
<keyword id="KW-0564">Palmitate</keyword>
<keyword id="KW-1185">Reference proteome</keyword>
<keyword id="KW-0812">Transmembrane</keyword>
<keyword id="KW-1134">Transmembrane beta strand</keyword>
<protein>
    <recommendedName>
        <fullName evidence="4">Gasdermin-C4</fullName>
    </recommendedName>
    <component>
        <recommendedName>
            <fullName evidence="5">Gasdermin-C4, N-terminal</fullName>
            <shortName evidence="5">GSDMC4-NT</shortName>
        </recommendedName>
    </component>
    <component>
        <recommendedName>
            <fullName evidence="5">Gasdermin-C4, C-terminal</fullName>
            <shortName evidence="5">GSDMC4-CT</shortName>
        </recommendedName>
    </component>
</protein>
<organism>
    <name type="scientific">Mus musculus</name>
    <name type="common">Mouse</name>
    <dbReference type="NCBI Taxonomy" id="10090"/>
    <lineage>
        <taxon>Eukaryota</taxon>
        <taxon>Metazoa</taxon>
        <taxon>Chordata</taxon>
        <taxon>Craniata</taxon>
        <taxon>Vertebrata</taxon>
        <taxon>Euteleostomi</taxon>
        <taxon>Mammalia</taxon>
        <taxon>Eutheria</taxon>
        <taxon>Euarchontoglires</taxon>
        <taxon>Glires</taxon>
        <taxon>Rodentia</taxon>
        <taxon>Myomorpha</taxon>
        <taxon>Muroidea</taxon>
        <taxon>Muridae</taxon>
        <taxon>Murinae</taxon>
        <taxon>Mus</taxon>
        <taxon>Mus</taxon>
    </lineage>
</organism>
<reference evidence="8" key="1">
    <citation type="journal article" date="2005" name="Science">
        <title>The transcriptional landscape of the mammalian genome.</title>
        <authorList>
            <person name="Carninci P."/>
            <person name="Kasukawa T."/>
            <person name="Katayama S."/>
            <person name="Gough J."/>
            <person name="Frith M.C."/>
            <person name="Maeda N."/>
            <person name="Oyama R."/>
            <person name="Ravasi T."/>
            <person name="Lenhard B."/>
            <person name="Wells C."/>
            <person name="Kodzius R."/>
            <person name="Shimokawa K."/>
            <person name="Bajic V.B."/>
            <person name="Brenner S.E."/>
            <person name="Batalov S."/>
            <person name="Forrest A.R."/>
            <person name="Zavolan M."/>
            <person name="Davis M.J."/>
            <person name="Wilming L.G."/>
            <person name="Aidinis V."/>
            <person name="Allen J.E."/>
            <person name="Ambesi-Impiombato A."/>
            <person name="Apweiler R."/>
            <person name="Aturaliya R.N."/>
            <person name="Bailey T.L."/>
            <person name="Bansal M."/>
            <person name="Baxter L."/>
            <person name="Beisel K.W."/>
            <person name="Bersano T."/>
            <person name="Bono H."/>
            <person name="Chalk A.M."/>
            <person name="Chiu K.P."/>
            <person name="Choudhary V."/>
            <person name="Christoffels A."/>
            <person name="Clutterbuck D.R."/>
            <person name="Crowe M.L."/>
            <person name="Dalla E."/>
            <person name="Dalrymple B.P."/>
            <person name="de Bono B."/>
            <person name="Della Gatta G."/>
            <person name="di Bernardo D."/>
            <person name="Down T."/>
            <person name="Engstrom P."/>
            <person name="Fagiolini M."/>
            <person name="Faulkner G."/>
            <person name="Fletcher C.F."/>
            <person name="Fukushima T."/>
            <person name="Furuno M."/>
            <person name="Futaki S."/>
            <person name="Gariboldi M."/>
            <person name="Georgii-Hemming P."/>
            <person name="Gingeras T.R."/>
            <person name="Gojobori T."/>
            <person name="Green R.E."/>
            <person name="Gustincich S."/>
            <person name="Harbers M."/>
            <person name="Hayashi Y."/>
            <person name="Hensch T.K."/>
            <person name="Hirokawa N."/>
            <person name="Hill D."/>
            <person name="Huminiecki L."/>
            <person name="Iacono M."/>
            <person name="Ikeo K."/>
            <person name="Iwama A."/>
            <person name="Ishikawa T."/>
            <person name="Jakt M."/>
            <person name="Kanapin A."/>
            <person name="Katoh M."/>
            <person name="Kawasawa Y."/>
            <person name="Kelso J."/>
            <person name="Kitamura H."/>
            <person name="Kitano H."/>
            <person name="Kollias G."/>
            <person name="Krishnan S.P."/>
            <person name="Kruger A."/>
            <person name="Kummerfeld S.K."/>
            <person name="Kurochkin I.V."/>
            <person name="Lareau L.F."/>
            <person name="Lazarevic D."/>
            <person name="Lipovich L."/>
            <person name="Liu J."/>
            <person name="Liuni S."/>
            <person name="McWilliam S."/>
            <person name="Madan Babu M."/>
            <person name="Madera M."/>
            <person name="Marchionni L."/>
            <person name="Matsuda H."/>
            <person name="Matsuzawa S."/>
            <person name="Miki H."/>
            <person name="Mignone F."/>
            <person name="Miyake S."/>
            <person name="Morris K."/>
            <person name="Mottagui-Tabar S."/>
            <person name="Mulder N."/>
            <person name="Nakano N."/>
            <person name="Nakauchi H."/>
            <person name="Ng P."/>
            <person name="Nilsson R."/>
            <person name="Nishiguchi S."/>
            <person name="Nishikawa S."/>
            <person name="Nori F."/>
            <person name="Ohara O."/>
            <person name="Okazaki Y."/>
            <person name="Orlando V."/>
            <person name="Pang K.C."/>
            <person name="Pavan W.J."/>
            <person name="Pavesi G."/>
            <person name="Pesole G."/>
            <person name="Petrovsky N."/>
            <person name="Piazza S."/>
            <person name="Reed J."/>
            <person name="Reid J.F."/>
            <person name="Ring B.Z."/>
            <person name="Ringwald M."/>
            <person name="Rost B."/>
            <person name="Ruan Y."/>
            <person name="Salzberg S.L."/>
            <person name="Sandelin A."/>
            <person name="Schneider C."/>
            <person name="Schoenbach C."/>
            <person name="Sekiguchi K."/>
            <person name="Semple C.A."/>
            <person name="Seno S."/>
            <person name="Sessa L."/>
            <person name="Sheng Y."/>
            <person name="Shibata Y."/>
            <person name="Shimada H."/>
            <person name="Shimada K."/>
            <person name="Silva D."/>
            <person name="Sinclair B."/>
            <person name="Sperling S."/>
            <person name="Stupka E."/>
            <person name="Sugiura K."/>
            <person name="Sultana R."/>
            <person name="Takenaka Y."/>
            <person name="Taki K."/>
            <person name="Tammoja K."/>
            <person name="Tan S.L."/>
            <person name="Tang S."/>
            <person name="Taylor M.S."/>
            <person name="Tegner J."/>
            <person name="Teichmann S.A."/>
            <person name="Ueda H.R."/>
            <person name="van Nimwegen E."/>
            <person name="Verardo R."/>
            <person name="Wei C.L."/>
            <person name="Yagi K."/>
            <person name="Yamanishi H."/>
            <person name="Zabarovsky E."/>
            <person name="Zhu S."/>
            <person name="Zimmer A."/>
            <person name="Hide W."/>
            <person name="Bult C."/>
            <person name="Grimmond S.M."/>
            <person name="Teasdale R.D."/>
            <person name="Liu E.T."/>
            <person name="Brusic V."/>
            <person name="Quackenbush J."/>
            <person name="Wahlestedt C."/>
            <person name="Mattick J.S."/>
            <person name="Hume D.A."/>
            <person name="Kai C."/>
            <person name="Sasaki D."/>
            <person name="Tomaru Y."/>
            <person name="Fukuda S."/>
            <person name="Kanamori-Katayama M."/>
            <person name="Suzuki M."/>
            <person name="Aoki J."/>
            <person name="Arakawa T."/>
            <person name="Iida J."/>
            <person name="Imamura K."/>
            <person name="Itoh M."/>
            <person name="Kato T."/>
            <person name="Kawaji H."/>
            <person name="Kawagashira N."/>
            <person name="Kawashima T."/>
            <person name="Kojima M."/>
            <person name="Kondo S."/>
            <person name="Konno H."/>
            <person name="Nakano K."/>
            <person name="Ninomiya N."/>
            <person name="Nishio T."/>
            <person name="Okada M."/>
            <person name="Plessy C."/>
            <person name="Shibata K."/>
            <person name="Shiraki T."/>
            <person name="Suzuki S."/>
            <person name="Tagami M."/>
            <person name="Waki K."/>
            <person name="Watahiki A."/>
            <person name="Okamura-Oho Y."/>
            <person name="Suzuki H."/>
            <person name="Kawai J."/>
            <person name="Hayashizaki Y."/>
        </authorList>
    </citation>
    <scope>NUCLEOTIDE SEQUENCE [LARGE SCALE MRNA]</scope>
    <source>
        <strain evidence="8">C57BL/6J</strain>
        <tissue evidence="7">Colon</tissue>
        <tissue evidence="8">Thymus</tissue>
    </source>
</reference>
<reference key="2">
    <citation type="journal article" date="2009" name="PLoS Biol.">
        <title>Lineage-specific biology revealed by a finished genome assembly of the mouse.</title>
        <authorList>
            <person name="Church D.M."/>
            <person name="Goodstadt L."/>
            <person name="Hillier L.W."/>
            <person name="Zody M.C."/>
            <person name="Goldstein S."/>
            <person name="She X."/>
            <person name="Bult C.J."/>
            <person name="Agarwala R."/>
            <person name="Cherry J.L."/>
            <person name="DiCuccio M."/>
            <person name="Hlavina W."/>
            <person name="Kapustin Y."/>
            <person name="Meric P."/>
            <person name="Maglott D."/>
            <person name="Birtle Z."/>
            <person name="Marques A.C."/>
            <person name="Graves T."/>
            <person name="Zhou S."/>
            <person name="Teague B."/>
            <person name="Potamousis K."/>
            <person name="Churas C."/>
            <person name="Place M."/>
            <person name="Herschleb J."/>
            <person name="Runnheim R."/>
            <person name="Forrest D."/>
            <person name="Amos-Landgraf J."/>
            <person name="Schwartz D.C."/>
            <person name="Cheng Z."/>
            <person name="Lindblad-Toh K."/>
            <person name="Eichler E.E."/>
            <person name="Ponting C.P."/>
        </authorList>
    </citation>
    <scope>NUCLEOTIDE SEQUENCE [LARGE SCALE GENOMIC DNA]</scope>
    <source>
        <strain>C57BL/6J</strain>
    </source>
</reference>
<reference evidence="5" key="3">
    <citation type="journal article" date="2007" name="Genomics">
        <title>Members of a novel gene family, Gsdm, are expressed exclusively in the epithelium of the skin and gastrointestinal tract in a highly tissue-specific manner.</title>
        <authorList>
            <person name="Tamura M."/>
            <person name="Tanaka S."/>
            <person name="Fujii T."/>
            <person name="Aoki A."/>
            <person name="Komiyama H."/>
            <person name="Ezawa K."/>
            <person name="Sumiyama K."/>
            <person name="Sagai T."/>
            <person name="Shiroishi T."/>
        </authorList>
    </citation>
    <scope>IDENTIFICATION</scope>
</reference>
<reference key="4">
    <citation type="journal article" date="2021" name="Cell Res.">
        <title>The metabolite alpha-KG induces GSDMC-dependent pyroptosis through death receptor 6-activated caspase-8.</title>
        <authorList>
            <person name="Zhang J.Y."/>
            <person name="Zhou B."/>
            <person name="Sun R.Y."/>
            <person name="Ai Y.L."/>
            <person name="Cheng K."/>
            <person name="Li F.N."/>
            <person name="Wang B.R."/>
            <person name="Liu F.J."/>
            <person name="Jiang Z.H."/>
            <person name="Wang W.J."/>
            <person name="Zhou D."/>
            <person name="Chen H.Z."/>
            <person name="Wu Q."/>
        </authorList>
    </citation>
    <scope>PROTEOLYTIC CLEAVAGE</scope>
</reference>
<sequence length="480" mass="53992">MGYSFDRASKDVVKKLQGRDLRPVECLSDATKFRLFHILQETPRSGWETEDIPVGFTLLDLLEPNFPVPEPEVSAPKPFIHVQSTDLEANLNVADIARGGVGYVGYGGYNIEVQSTSIPNPKLEILQNRKLLDKLPTFMKFCRMERKNLYVVTEAYEVSKDTMLTGLSSVNLLVKGFFKQLFKVRGKAGRSEKYSIPIPKGSVLAYKKQQLVIENNTCVILPSATKKKMTFPDRPLKLYDLPVTLRYQEEVIETGSWIDDIDPIGTIEEPANLNFMCLQHEVSEQTQLLAELSKDVQEVVFSSFLHMLSDRDVLYDLMKMLELNQLGHMDGPGGKILDELRKDSSTPHDVLKDLNLYLLQALLVLSDTQLCLLAQSVKMGLLPHQVELVKSILQTNFKYSSNTPFTLQPQLLAPLQGEGLAITYELLEECGLKMELNNPRSTWDLEAKMPLSALYGSLSFLQQLQKANSSSKPSLSPGYI</sequence>
<proteinExistence type="evidence at protein level"/>